<organism>
    <name type="scientific">Corynebacterium urealyticum (strain ATCC 43042 / DSM 7109)</name>
    <dbReference type="NCBI Taxonomy" id="504474"/>
    <lineage>
        <taxon>Bacteria</taxon>
        <taxon>Bacillati</taxon>
        <taxon>Actinomycetota</taxon>
        <taxon>Actinomycetes</taxon>
        <taxon>Mycobacteriales</taxon>
        <taxon>Corynebacteriaceae</taxon>
        <taxon>Corynebacterium</taxon>
    </lineage>
</organism>
<evidence type="ECO:0000255" key="1">
    <source>
        <dbReference type="HAMAP-Rule" id="MF_01389"/>
    </source>
</evidence>
<accession>B1VHT5</accession>
<sequence>MAPIKIGIGGPVGSGKTELIERITRALDGEIEMAAITNDIYTLEDAKILARNSVLDEDRIIGVETGGCPHTAIREDTSMNDAAYEEIVKRHPNLDIVFVESGGDNLSATFSPELVDFSIYIIDVAQGEKIPRKAGQGMIKSDLFVINKTDLAPYVGADLSVMEADSKNFRGEKPFVMTNLKTDEGLDGVLRWIREDVLMSDLAES</sequence>
<name>UREG_CORU7</name>
<feature type="chain" id="PRO_1000145172" description="Urease accessory protein UreG">
    <location>
        <begin position="1"/>
        <end position="205"/>
    </location>
</feature>
<feature type="binding site" evidence="1">
    <location>
        <begin position="10"/>
        <end position="17"/>
    </location>
    <ligand>
        <name>GTP</name>
        <dbReference type="ChEBI" id="CHEBI:37565"/>
    </ligand>
</feature>
<proteinExistence type="inferred from homology"/>
<protein>
    <recommendedName>
        <fullName evidence="1">Urease accessory protein UreG</fullName>
    </recommendedName>
</protein>
<dbReference type="EMBL" id="AM942444">
    <property type="protein sequence ID" value="CAQ05735.1"/>
    <property type="molecule type" value="Genomic_DNA"/>
</dbReference>
<dbReference type="RefSeq" id="WP_012361011.1">
    <property type="nucleotide sequence ID" value="NC_010545.1"/>
</dbReference>
<dbReference type="SMR" id="B1VHT5"/>
<dbReference type="STRING" id="504474.cu1776"/>
<dbReference type="GeneID" id="60604559"/>
<dbReference type="KEGG" id="cur:cu1776"/>
<dbReference type="eggNOG" id="COG0378">
    <property type="taxonomic scope" value="Bacteria"/>
</dbReference>
<dbReference type="HOGENOM" id="CLU_072144_1_0_11"/>
<dbReference type="Proteomes" id="UP000001727">
    <property type="component" value="Chromosome"/>
</dbReference>
<dbReference type="GO" id="GO:0005737">
    <property type="term" value="C:cytoplasm"/>
    <property type="evidence" value="ECO:0007669"/>
    <property type="project" value="UniProtKB-SubCell"/>
</dbReference>
<dbReference type="GO" id="GO:0005525">
    <property type="term" value="F:GTP binding"/>
    <property type="evidence" value="ECO:0007669"/>
    <property type="project" value="UniProtKB-KW"/>
</dbReference>
<dbReference type="GO" id="GO:0003924">
    <property type="term" value="F:GTPase activity"/>
    <property type="evidence" value="ECO:0007669"/>
    <property type="project" value="InterPro"/>
</dbReference>
<dbReference type="GO" id="GO:0016151">
    <property type="term" value="F:nickel cation binding"/>
    <property type="evidence" value="ECO:0007669"/>
    <property type="project" value="UniProtKB-UniRule"/>
</dbReference>
<dbReference type="GO" id="GO:0043419">
    <property type="term" value="P:urea catabolic process"/>
    <property type="evidence" value="ECO:0007669"/>
    <property type="project" value="InterPro"/>
</dbReference>
<dbReference type="CDD" id="cd05540">
    <property type="entry name" value="UreG"/>
    <property type="match status" value="1"/>
</dbReference>
<dbReference type="Gene3D" id="3.40.50.300">
    <property type="entry name" value="P-loop containing nucleotide triphosphate hydrolases"/>
    <property type="match status" value="1"/>
</dbReference>
<dbReference type="HAMAP" id="MF_01389">
    <property type="entry name" value="UreG"/>
    <property type="match status" value="1"/>
</dbReference>
<dbReference type="InterPro" id="IPR003495">
    <property type="entry name" value="CobW/HypB/UreG_nucleotide-bd"/>
</dbReference>
<dbReference type="InterPro" id="IPR027417">
    <property type="entry name" value="P-loop_NTPase"/>
</dbReference>
<dbReference type="InterPro" id="IPR004400">
    <property type="entry name" value="UreG"/>
</dbReference>
<dbReference type="NCBIfam" id="TIGR00101">
    <property type="entry name" value="ureG"/>
    <property type="match status" value="1"/>
</dbReference>
<dbReference type="PANTHER" id="PTHR31715">
    <property type="entry name" value="UREASE ACCESSORY PROTEIN G"/>
    <property type="match status" value="1"/>
</dbReference>
<dbReference type="PANTHER" id="PTHR31715:SF0">
    <property type="entry name" value="UREASE ACCESSORY PROTEIN G"/>
    <property type="match status" value="1"/>
</dbReference>
<dbReference type="Pfam" id="PF02492">
    <property type="entry name" value="cobW"/>
    <property type="match status" value="1"/>
</dbReference>
<dbReference type="PIRSF" id="PIRSF005624">
    <property type="entry name" value="Ni-bind_GTPase"/>
    <property type="match status" value="1"/>
</dbReference>
<dbReference type="SUPFAM" id="SSF52540">
    <property type="entry name" value="P-loop containing nucleoside triphosphate hydrolases"/>
    <property type="match status" value="1"/>
</dbReference>
<keyword id="KW-0143">Chaperone</keyword>
<keyword id="KW-0963">Cytoplasm</keyword>
<keyword id="KW-0342">GTP-binding</keyword>
<keyword id="KW-0996">Nickel insertion</keyword>
<keyword id="KW-0547">Nucleotide-binding</keyword>
<keyword id="KW-1185">Reference proteome</keyword>
<comment type="function">
    <text evidence="1">Facilitates the functional incorporation of the urease nickel metallocenter. This process requires GTP hydrolysis, probably effectuated by UreG.</text>
</comment>
<comment type="subunit">
    <text evidence="1">Homodimer. UreD, UreF and UreG form a complex that acts as a GTP-hydrolysis-dependent molecular chaperone, activating the urease apoprotein by helping to assemble the nickel containing metallocenter of UreC. The UreE protein probably delivers the nickel.</text>
</comment>
<comment type="subcellular location">
    <subcellularLocation>
        <location evidence="1">Cytoplasm</location>
    </subcellularLocation>
</comment>
<comment type="similarity">
    <text evidence="1">Belongs to the SIMIBI class G3E GTPase family. UreG subfamily.</text>
</comment>
<gene>
    <name evidence="1" type="primary">ureG</name>
    <name type="ordered locus">cu1776</name>
</gene>
<reference key="1">
    <citation type="journal article" date="2008" name="J. Biotechnol.">
        <title>The lifestyle of Corynebacterium urealyticum derived from its complete genome sequence established by pyrosequencing.</title>
        <authorList>
            <person name="Tauch A."/>
            <person name="Trost E."/>
            <person name="Tilker A."/>
            <person name="Ludewig U."/>
            <person name="Schneiker S."/>
            <person name="Goesmann A."/>
            <person name="Arnold W."/>
            <person name="Bekel T."/>
            <person name="Brinkrolf K."/>
            <person name="Brune I."/>
            <person name="Goetker S."/>
            <person name="Kalinowski J."/>
            <person name="Kamp P.-B."/>
            <person name="Lobo F.P."/>
            <person name="Viehoever P."/>
            <person name="Weisshaar B."/>
            <person name="Soriano F."/>
            <person name="Droege M."/>
            <person name="Puehler A."/>
        </authorList>
    </citation>
    <scope>NUCLEOTIDE SEQUENCE [LARGE SCALE GENOMIC DNA]</scope>
    <source>
        <strain>ATCC 43042 / DSM 7109</strain>
    </source>
</reference>